<name>NUOJ_RICTY</name>
<protein>
    <recommendedName>
        <fullName>NADH-quinone oxidoreductase subunit J</fullName>
        <ecNumber>7.1.1.-</ecNumber>
    </recommendedName>
    <alternativeName>
        <fullName>NADH dehydrogenase I subunit J</fullName>
    </alternativeName>
    <alternativeName>
        <fullName>NDH-1 subunit J</fullName>
    </alternativeName>
</protein>
<proteinExistence type="inferred from homology"/>
<sequence>MPIFFYLFTTLIIISSLCVVLSKNSVYSVLWLIFTFINAAGLMILLGAEFLAMLLIVIYVGAVAVLFLFVIMMLDINFNQAITKLRENLSLSIFITLIMFVDLVITVILSTKNINHSSNISFAIANNISNTKAIGSVLYTDFMLPFQMAGLILFVAMISCITLTLKKRERVKYQDIRKQLSHNKGNVILMTKPILNKGVENIKYE</sequence>
<gene>
    <name type="primary">nuoJ</name>
    <name type="ordered locus">RT0777</name>
</gene>
<accession>Q68VV9</accession>
<feature type="chain" id="PRO_0000287841" description="NADH-quinone oxidoreductase subunit J">
    <location>
        <begin position="1"/>
        <end position="205"/>
    </location>
</feature>
<feature type="transmembrane region" description="Helical" evidence="2">
    <location>
        <begin position="1"/>
        <end position="21"/>
    </location>
</feature>
<feature type="transmembrane region" description="Helical" evidence="2">
    <location>
        <begin position="26"/>
        <end position="46"/>
    </location>
</feature>
<feature type="transmembrane region" description="Helical" evidence="2">
    <location>
        <begin position="54"/>
        <end position="74"/>
    </location>
</feature>
<feature type="transmembrane region" description="Helical" evidence="2">
    <location>
        <begin position="89"/>
        <end position="109"/>
    </location>
</feature>
<feature type="transmembrane region" description="Helical" evidence="2">
    <location>
        <begin position="142"/>
        <end position="162"/>
    </location>
</feature>
<organism>
    <name type="scientific">Rickettsia typhi (strain ATCC VR-144 / Wilmington)</name>
    <dbReference type="NCBI Taxonomy" id="257363"/>
    <lineage>
        <taxon>Bacteria</taxon>
        <taxon>Pseudomonadati</taxon>
        <taxon>Pseudomonadota</taxon>
        <taxon>Alphaproteobacteria</taxon>
        <taxon>Rickettsiales</taxon>
        <taxon>Rickettsiaceae</taxon>
        <taxon>Rickettsieae</taxon>
        <taxon>Rickettsia</taxon>
        <taxon>typhus group</taxon>
    </lineage>
</organism>
<dbReference type="EC" id="7.1.1.-"/>
<dbReference type="EMBL" id="AE017197">
    <property type="protein sequence ID" value="AAU04233.1"/>
    <property type="molecule type" value="Genomic_DNA"/>
</dbReference>
<dbReference type="RefSeq" id="WP_011191208.1">
    <property type="nucleotide sequence ID" value="NC_006142.1"/>
</dbReference>
<dbReference type="SMR" id="Q68VV9"/>
<dbReference type="KEGG" id="rty:RT0777"/>
<dbReference type="eggNOG" id="COG0839">
    <property type="taxonomic scope" value="Bacteria"/>
</dbReference>
<dbReference type="HOGENOM" id="CLU_085957_5_1_5"/>
<dbReference type="OrthoDB" id="9795409at2"/>
<dbReference type="Proteomes" id="UP000000604">
    <property type="component" value="Chromosome"/>
</dbReference>
<dbReference type="GO" id="GO:0005886">
    <property type="term" value="C:plasma membrane"/>
    <property type="evidence" value="ECO:0007669"/>
    <property type="project" value="UniProtKB-SubCell"/>
</dbReference>
<dbReference type="GO" id="GO:0008137">
    <property type="term" value="F:NADH dehydrogenase (ubiquinone) activity"/>
    <property type="evidence" value="ECO:0007669"/>
    <property type="project" value="InterPro"/>
</dbReference>
<dbReference type="GO" id="GO:0048038">
    <property type="term" value="F:quinone binding"/>
    <property type="evidence" value="ECO:0007669"/>
    <property type="project" value="UniProtKB-KW"/>
</dbReference>
<dbReference type="Gene3D" id="1.20.120.1200">
    <property type="entry name" value="NADH-ubiquinone/plastoquinone oxidoreductase chain 6, subunit NuoJ"/>
    <property type="match status" value="1"/>
</dbReference>
<dbReference type="InterPro" id="IPR001457">
    <property type="entry name" value="NADH_UbQ/plastoQ_OxRdtase_su6"/>
</dbReference>
<dbReference type="InterPro" id="IPR042106">
    <property type="entry name" value="Nuo/plastoQ_OxRdtase_6_NuoJ"/>
</dbReference>
<dbReference type="NCBIfam" id="NF005164">
    <property type="entry name" value="PRK06638.1-4"/>
    <property type="match status" value="1"/>
</dbReference>
<dbReference type="PANTHER" id="PTHR33269">
    <property type="entry name" value="NADH-UBIQUINONE OXIDOREDUCTASE CHAIN 6"/>
    <property type="match status" value="1"/>
</dbReference>
<dbReference type="PANTHER" id="PTHR33269:SF17">
    <property type="entry name" value="NADH-UBIQUINONE OXIDOREDUCTASE CHAIN 6"/>
    <property type="match status" value="1"/>
</dbReference>
<dbReference type="Pfam" id="PF00499">
    <property type="entry name" value="Oxidored_q3"/>
    <property type="match status" value="1"/>
</dbReference>
<reference key="1">
    <citation type="journal article" date="2004" name="J. Bacteriol.">
        <title>Complete genome sequence of Rickettsia typhi and comparison with sequences of other Rickettsiae.</title>
        <authorList>
            <person name="McLeod M.P."/>
            <person name="Qin X."/>
            <person name="Karpathy S.E."/>
            <person name="Gioia J."/>
            <person name="Highlander S.K."/>
            <person name="Fox G.E."/>
            <person name="McNeill T.Z."/>
            <person name="Jiang H."/>
            <person name="Muzny D."/>
            <person name="Jacob L.S."/>
            <person name="Hawes A.C."/>
            <person name="Sodergren E."/>
            <person name="Gill R."/>
            <person name="Hume J."/>
            <person name="Morgan M."/>
            <person name="Fan G."/>
            <person name="Amin A.G."/>
            <person name="Gibbs R.A."/>
            <person name="Hong C."/>
            <person name="Yu X.-J."/>
            <person name="Walker D.H."/>
            <person name="Weinstock G.M."/>
        </authorList>
    </citation>
    <scope>NUCLEOTIDE SEQUENCE [LARGE SCALE GENOMIC DNA]</scope>
    <source>
        <strain>ATCC VR-144 / Wilmington</strain>
    </source>
</reference>
<comment type="function">
    <text evidence="1">NDH-1 shuttles electrons from NADH, via FMN and iron-sulfur (Fe-S) centers, to quinones in the respiratory chain. Couples the redox reaction to proton translocation (for every two electrons transferred, four hydrogen ions are translocated across the cytoplasmic membrane), and thus conserves the redox energy in a proton gradient (By similarity).</text>
</comment>
<comment type="catalytic activity">
    <reaction>
        <text>a quinone + NADH + 5 H(+)(in) = a quinol + NAD(+) + 4 H(+)(out)</text>
        <dbReference type="Rhea" id="RHEA:57888"/>
        <dbReference type="ChEBI" id="CHEBI:15378"/>
        <dbReference type="ChEBI" id="CHEBI:24646"/>
        <dbReference type="ChEBI" id="CHEBI:57540"/>
        <dbReference type="ChEBI" id="CHEBI:57945"/>
        <dbReference type="ChEBI" id="CHEBI:132124"/>
    </reaction>
</comment>
<comment type="subcellular location">
    <subcellularLocation>
        <location>Cell membrane</location>
        <topology>Multi-pass membrane protein</topology>
    </subcellularLocation>
</comment>
<comment type="similarity">
    <text evidence="3">Belongs to the complex I subunit 6 family.</text>
</comment>
<keyword id="KW-1003">Cell membrane</keyword>
<keyword id="KW-0472">Membrane</keyword>
<keyword id="KW-0520">NAD</keyword>
<keyword id="KW-0874">Quinone</keyword>
<keyword id="KW-1278">Translocase</keyword>
<keyword id="KW-0812">Transmembrane</keyword>
<keyword id="KW-1133">Transmembrane helix</keyword>
<evidence type="ECO:0000250" key="1"/>
<evidence type="ECO:0000255" key="2"/>
<evidence type="ECO:0000305" key="3"/>